<reference key="1">
    <citation type="journal article" date="2009" name="BMC Microbiol.">
        <title>The genome sequence of Geobacter metallireducens: features of metabolism, physiology and regulation common and dissimilar to Geobacter sulfurreducens.</title>
        <authorList>
            <person name="Aklujkar M."/>
            <person name="Krushkal J."/>
            <person name="DiBartolo G."/>
            <person name="Lapidus A."/>
            <person name="Land M.L."/>
            <person name="Lovley D.R."/>
        </authorList>
    </citation>
    <scope>NUCLEOTIDE SEQUENCE [LARGE SCALE GENOMIC DNA]</scope>
    <source>
        <strain>ATCC 53774 / DSM 7210 / GS-15</strain>
    </source>
</reference>
<reference key="2">
    <citation type="journal article" date="1999" name="FEMS Microbiol. Lett.">
        <title>Purification and characterization of triheme cytochrome c7 from the metal-reducing bacterium, Geobacter metallireducens.</title>
        <authorList>
            <person name="Afkar E."/>
            <person name="Fukumori Y."/>
        </authorList>
    </citation>
    <scope>PROTEIN SEQUENCE OF 21-37</scope>
    <scope>FUNCTION</scope>
    <scope>BIOPHYSICOCHEMICAL PROPERTIES</scope>
</reference>
<reference key="3">
    <citation type="journal article" date="2000" name="Anaerobe">
        <title>Electron transfer in the dissimilatory iron-reducing bacterium Geobacter metallireducens.</title>
        <authorList>
            <person name="Champine J.E."/>
            <person name="Underhill B."/>
            <person name="Johnston J.M."/>
            <person name="Lilly W.W."/>
            <person name="Goodwin S."/>
        </authorList>
    </citation>
    <scope>PROTEIN SEQUENCE OF 21-57</scope>
    <scope>FUNCTION</scope>
    <scope>BIOPHYSICOCHEMICAL PROPERTIES</scope>
    <scope>MASS SPECTROMETRY</scope>
</reference>
<proteinExistence type="evidence at protein level"/>
<accession>P81894</accession>
<accession>Q39RK4</accession>
<comment type="function">
    <text evidence="2 3">May be involved in anaerobic iron respiration.</text>
</comment>
<comment type="biophysicochemical properties">
    <redoxPotential>
        <text evidence="2 3">E(0) is -91 mV (Ref.3) or -190 mV.</text>
    </redoxPotential>
</comment>
<comment type="PTM">
    <text>Binds 3 heme groups per subunit.</text>
</comment>
<comment type="mass spectrometry"/>
<comment type="similarity">
    <text evidence="4">Belongs to the cytochrome c family.</text>
</comment>
<protein>
    <recommendedName>
        <fullName>Cytochrome c7</fullName>
    </recommendedName>
</protein>
<gene>
    <name type="ordered locus">Gmet_2902</name>
</gene>
<keyword id="KW-0903">Direct protein sequencing</keyword>
<keyword id="KW-0249">Electron transport</keyword>
<keyword id="KW-0349">Heme</keyword>
<keyword id="KW-0408">Iron</keyword>
<keyword id="KW-0479">Metal-binding</keyword>
<keyword id="KW-1185">Reference proteome</keyword>
<keyword id="KW-0732">Signal</keyword>
<keyword id="KW-0763">Sulfate respiration</keyword>
<keyword id="KW-0813">Transport</keyword>
<dbReference type="EMBL" id="CP000148">
    <property type="protein sequence ID" value="ABB33120.1"/>
    <property type="molecule type" value="Genomic_DNA"/>
</dbReference>
<dbReference type="RefSeq" id="WP_004512838.1">
    <property type="nucleotide sequence ID" value="NC_007517.1"/>
</dbReference>
<dbReference type="SMR" id="P81894"/>
<dbReference type="STRING" id="269799.Gmet_2902"/>
<dbReference type="KEGG" id="gme:Gmet_2902"/>
<dbReference type="eggNOG" id="ENOG50335B9">
    <property type="taxonomic scope" value="Bacteria"/>
</dbReference>
<dbReference type="HOGENOM" id="CLU_188310_0_0_7"/>
<dbReference type="Proteomes" id="UP000007073">
    <property type="component" value="Chromosome"/>
</dbReference>
<dbReference type="GO" id="GO:0009055">
    <property type="term" value="F:electron transfer activity"/>
    <property type="evidence" value="ECO:0007669"/>
    <property type="project" value="InterPro"/>
</dbReference>
<dbReference type="GO" id="GO:0020037">
    <property type="term" value="F:heme binding"/>
    <property type="evidence" value="ECO:0007669"/>
    <property type="project" value="InterPro"/>
</dbReference>
<dbReference type="GO" id="GO:0046872">
    <property type="term" value="F:metal ion binding"/>
    <property type="evidence" value="ECO:0007669"/>
    <property type="project" value="UniProtKB-KW"/>
</dbReference>
<dbReference type="GO" id="GO:0009061">
    <property type="term" value="P:anaerobic respiration"/>
    <property type="evidence" value="ECO:0007669"/>
    <property type="project" value="UniProtKB-KW"/>
</dbReference>
<dbReference type="CDD" id="cd08168">
    <property type="entry name" value="Cytochrom_C3"/>
    <property type="match status" value="1"/>
</dbReference>
<dbReference type="FunFam" id="3.90.10.10:FF:000001">
    <property type="entry name" value="Cytochrome C"/>
    <property type="match status" value="1"/>
</dbReference>
<dbReference type="Gene3D" id="3.90.10.10">
    <property type="entry name" value="Cytochrome C3"/>
    <property type="match status" value="1"/>
</dbReference>
<dbReference type="InterPro" id="IPR002322">
    <property type="entry name" value="Cyt_c_III"/>
</dbReference>
<dbReference type="InterPro" id="IPR020942">
    <property type="entry name" value="Cyt_c_III_dom"/>
</dbReference>
<dbReference type="InterPro" id="IPR053591">
    <property type="entry name" value="Cytochrome_c"/>
</dbReference>
<dbReference type="InterPro" id="IPR036280">
    <property type="entry name" value="Multihaem_cyt_sf"/>
</dbReference>
<dbReference type="NCBIfam" id="NF043011">
    <property type="entry name" value="CytC7_Geobact"/>
    <property type="match status" value="1"/>
</dbReference>
<dbReference type="Pfam" id="PF02085">
    <property type="entry name" value="Cytochrom_CIII"/>
    <property type="match status" value="1"/>
</dbReference>
<dbReference type="PRINTS" id="PR00609">
    <property type="entry name" value="CYTOCHROMEC3"/>
</dbReference>
<dbReference type="SUPFAM" id="SSF48695">
    <property type="entry name" value="Multiheme cytochromes"/>
    <property type="match status" value="1"/>
</dbReference>
<sequence>MKRIIASLALSVFCAGLAFAADELTFKAKNGDVKFPHKKHQQVVGNCKKCHEKGPGKIEGFGKDWAHKTCKGCHEEMKKGPTKCGDCHKK</sequence>
<organism>
    <name type="scientific">Geobacter metallireducens (strain ATCC 53774 / DSM 7210 / GS-15)</name>
    <dbReference type="NCBI Taxonomy" id="269799"/>
    <lineage>
        <taxon>Bacteria</taxon>
        <taxon>Pseudomonadati</taxon>
        <taxon>Thermodesulfobacteriota</taxon>
        <taxon>Desulfuromonadia</taxon>
        <taxon>Geobacterales</taxon>
        <taxon>Geobacteraceae</taxon>
        <taxon>Geobacter</taxon>
    </lineage>
</organism>
<evidence type="ECO:0000250" key="1"/>
<evidence type="ECO:0000269" key="2">
    <source>
    </source>
</evidence>
<evidence type="ECO:0000269" key="3">
    <source ref="3"/>
</evidence>
<evidence type="ECO:0000305" key="4"/>
<feature type="signal peptide" evidence="2 3">
    <location>
        <begin position="1"/>
        <end position="20"/>
    </location>
</feature>
<feature type="chain" id="PRO_0000108368" description="Cytochrome c7">
    <location>
        <begin position="21"/>
        <end position="90"/>
    </location>
</feature>
<feature type="binding site" description="axial binding residue" evidence="1">
    <location>
        <position position="37"/>
    </location>
    <ligand>
        <name>heme</name>
        <dbReference type="ChEBI" id="CHEBI:30413"/>
        <label>1</label>
    </ligand>
    <ligandPart>
        <name>Fe</name>
        <dbReference type="ChEBI" id="CHEBI:18248"/>
    </ligandPart>
</feature>
<feature type="binding site" description="axial binding residue" evidence="1">
    <location>
        <position position="40"/>
    </location>
    <ligand>
        <name>heme</name>
        <dbReference type="ChEBI" id="CHEBI:30413"/>
        <label>2</label>
    </ligand>
    <ligandPart>
        <name>Fe</name>
        <dbReference type="ChEBI" id="CHEBI:18248"/>
    </ligandPart>
</feature>
<feature type="binding site" description="covalent" evidence="1">
    <location>
        <position position="47"/>
    </location>
    <ligand>
        <name>heme</name>
        <dbReference type="ChEBI" id="CHEBI:30413"/>
        <label>1</label>
    </ligand>
</feature>
<feature type="binding site" description="covalent" evidence="1">
    <location>
        <position position="50"/>
    </location>
    <ligand>
        <name>heme</name>
        <dbReference type="ChEBI" id="CHEBI:30413"/>
        <label>1</label>
    </ligand>
</feature>
<feature type="binding site" description="axial binding residue" evidence="1">
    <location>
        <position position="51"/>
    </location>
    <ligand>
        <name>heme</name>
        <dbReference type="ChEBI" id="CHEBI:30413"/>
        <label>1</label>
    </ligand>
    <ligandPart>
        <name>Fe</name>
        <dbReference type="ChEBI" id="CHEBI:18248"/>
    </ligandPart>
</feature>
<feature type="binding site" description="axial binding residue" evidence="1">
    <location>
        <position position="67"/>
    </location>
    <ligand>
        <name>heme</name>
        <dbReference type="ChEBI" id="CHEBI:30413"/>
        <label>3</label>
    </ligand>
    <ligandPart>
        <name>Fe</name>
        <dbReference type="ChEBI" id="CHEBI:18248"/>
    </ligandPart>
</feature>
<feature type="binding site" description="covalent" evidence="1">
    <location>
        <position position="70"/>
    </location>
    <ligand>
        <name>heme</name>
        <dbReference type="ChEBI" id="CHEBI:30413"/>
        <label>2</label>
    </ligand>
</feature>
<feature type="binding site" description="covalent" evidence="1">
    <location>
        <position position="73"/>
    </location>
    <ligand>
        <name>heme</name>
        <dbReference type="ChEBI" id="CHEBI:30413"/>
        <label>2</label>
    </ligand>
</feature>
<feature type="binding site" description="axial binding residue" evidence="1">
    <location>
        <position position="74"/>
    </location>
    <ligand>
        <name>heme</name>
        <dbReference type="ChEBI" id="CHEBI:30413"/>
        <label>2</label>
    </ligand>
    <ligandPart>
        <name>Fe</name>
        <dbReference type="ChEBI" id="CHEBI:18248"/>
    </ligandPart>
</feature>
<feature type="binding site" description="covalent" evidence="1">
    <location>
        <position position="84"/>
    </location>
    <ligand>
        <name>heme</name>
        <dbReference type="ChEBI" id="CHEBI:30413"/>
        <label>3</label>
    </ligand>
</feature>
<feature type="binding site" description="covalent" evidence="1">
    <location>
        <position position="87"/>
    </location>
    <ligand>
        <name>heme</name>
        <dbReference type="ChEBI" id="CHEBI:30413"/>
        <label>3</label>
    </ligand>
</feature>
<feature type="binding site" description="axial binding residue" evidence="1">
    <location>
        <position position="88"/>
    </location>
    <ligand>
        <name>heme</name>
        <dbReference type="ChEBI" id="CHEBI:30413"/>
        <label>3</label>
    </ligand>
    <ligandPart>
        <name>Fe</name>
        <dbReference type="ChEBI" id="CHEBI:18248"/>
    </ligandPart>
</feature>
<feature type="sequence conflict" description="In Ref. 3; AA sequence." evidence="4" ref="3">
    <original>DE</original>
    <variation>RR</variation>
    <location>
        <begin position="22"/>
        <end position="23"/>
    </location>
</feature>
<feature type="sequence conflict" description="In Ref. 2; AA sequence." evidence="4" ref="2">
    <original>H</original>
    <variation>P</variation>
    <location>
        <position position="37"/>
    </location>
</feature>
<feature type="sequence conflict" description="In Ref. 3; AA sequence." evidence="4" ref="3">
    <original>C</original>
    <variation>K</variation>
    <location>
        <position position="50"/>
    </location>
</feature>
<feature type="sequence conflict" description="In Ref. 3; AA sequence." evidence="4" ref="3">
    <location>
        <position position="53"/>
    </location>
</feature>
<name>CYC7_GEOMG</name>